<dbReference type="EMBL" id="AC010619">
    <property type="status" value="NOT_ANNOTATED_CDS"/>
    <property type="molecule type" value="Genomic_DNA"/>
</dbReference>
<dbReference type="CCDS" id="CCDS58672.1"/>
<dbReference type="RefSeq" id="NP_001182185.1">
    <property type="nucleotide sequence ID" value="NM_001195256.2"/>
</dbReference>
<dbReference type="RefSeq" id="NP_001372116.1">
    <property type="nucleotide sequence ID" value="NM_001385187.1"/>
</dbReference>
<dbReference type="RefSeq" id="XP_011524601.1">
    <property type="nucleotide sequence ID" value="XM_011526299.2"/>
</dbReference>
<dbReference type="SMR" id="I3L273"/>
<dbReference type="BioGRID" id="589425">
    <property type="interactions" value="1"/>
</dbReference>
<dbReference type="FunCoup" id="I3L273">
    <property type="interactions" value="57"/>
</dbReference>
<dbReference type="STRING" id="9606.ENSP00000459439"/>
<dbReference type="GlyCosmos" id="I3L273">
    <property type="glycosylation" value="5 sites, No reported glycans"/>
</dbReference>
<dbReference type="GlyGen" id="I3L273">
    <property type="glycosylation" value="8 sites"/>
</dbReference>
<dbReference type="iPTMnet" id="I3L273"/>
<dbReference type="PhosphoSitePlus" id="I3L273"/>
<dbReference type="BioMuta" id="GFY"/>
<dbReference type="MassIVE" id="I3L273"/>
<dbReference type="PaxDb" id="9606-ENSP00000459439"/>
<dbReference type="PeptideAtlas" id="I3L273"/>
<dbReference type="DNASU" id="100507003"/>
<dbReference type="Ensembl" id="ENST00000576655.5">
    <property type="protein sequence ID" value="ENSP00000459439.1"/>
    <property type="gene ID" value="ENSG00000261949.7"/>
</dbReference>
<dbReference type="Ensembl" id="ENST00000610896.3">
    <property type="protein sequence ID" value="ENSP00000478493.1"/>
    <property type="gene ID" value="ENSG00000261949.7"/>
</dbReference>
<dbReference type="GeneID" id="100507003"/>
<dbReference type="KEGG" id="hsa:100507003"/>
<dbReference type="MANE-Select" id="ENST00000610896.3">
    <property type="protein sequence ID" value="ENSP00000478493.1"/>
    <property type="RefSeq nucleotide sequence ID" value="NM_001195256.2"/>
    <property type="RefSeq protein sequence ID" value="NP_001182185.1"/>
</dbReference>
<dbReference type="UCSC" id="uc021uxm.1">
    <property type="organism name" value="human"/>
</dbReference>
<dbReference type="AGR" id="HGNC:44663"/>
<dbReference type="CTD" id="100507003"/>
<dbReference type="DisGeNET" id="100507003"/>
<dbReference type="GeneCards" id="GFY"/>
<dbReference type="HGNC" id="HGNC:44663">
    <property type="gene designation" value="GFY"/>
</dbReference>
<dbReference type="HPA" id="ENSG00000261949">
    <property type="expression patterns" value="Tissue enhanced (testis)"/>
</dbReference>
<dbReference type="MIM" id="618696">
    <property type="type" value="gene"/>
</dbReference>
<dbReference type="neXtProt" id="NX_I3L273"/>
<dbReference type="OpenTargets" id="ENSG00000261949"/>
<dbReference type="VEuPathDB" id="HostDB:ENSG00000261949"/>
<dbReference type="eggNOG" id="ENOG502RMAY">
    <property type="taxonomic scope" value="Eukaryota"/>
</dbReference>
<dbReference type="GeneTree" id="ENSGT00730000111841"/>
<dbReference type="HOGENOM" id="CLU_040045_0_0_1"/>
<dbReference type="InParanoid" id="I3L273"/>
<dbReference type="OMA" id="EPSKTPH"/>
<dbReference type="OrthoDB" id="9837867at2759"/>
<dbReference type="PAN-GO" id="I3L273">
    <property type="GO annotations" value="0 GO annotations based on evolutionary models"/>
</dbReference>
<dbReference type="PhylomeDB" id="I3L273"/>
<dbReference type="PathwayCommons" id="I3L273"/>
<dbReference type="BioGRID-ORCS" id="100507003">
    <property type="hits" value="12 hits in 1043 CRISPR screens"/>
</dbReference>
<dbReference type="GenomeRNAi" id="100507003"/>
<dbReference type="Pharos" id="I3L273">
    <property type="development level" value="Tdark"/>
</dbReference>
<dbReference type="PRO" id="PR:I3L273"/>
<dbReference type="Proteomes" id="UP000005640">
    <property type="component" value="Chromosome 19"/>
</dbReference>
<dbReference type="RNAct" id="I3L273">
    <property type="molecule type" value="protein"/>
</dbReference>
<dbReference type="Bgee" id="ENSG00000261949">
    <property type="expression patterns" value="Expressed in primordial germ cell in gonad and 19 other cell types or tissues"/>
</dbReference>
<dbReference type="GO" id="GO:0000139">
    <property type="term" value="C:Golgi membrane"/>
    <property type="evidence" value="ECO:0000250"/>
    <property type="project" value="UniProtKB"/>
</dbReference>
<dbReference type="GO" id="GO:1905515">
    <property type="term" value="P:non-motile cilium assembly"/>
    <property type="evidence" value="ECO:0007669"/>
    <property type="project" value="Ensembl"/>
</dbReference>
<dbReference type="GO" id="GO:0097499">
    <property type="term" value="P:protein localization to non-motile cilium"/>
    <property type="evidence" value="ECO:0007669"/>
    <property type="project" value="Ensembl"/>
</dbReference>
<dbReference type="GO" id="GO:0007608">
    <property type="term" value="P:sensory perception of smell"/>
    <property type="evidence" value="ECO:0000250"/>
    <property type="project" value="UniProtKB"/>
</dbReference>
<dbReference type="PANTHER" id="PTHR47641:SF1">
    <property type="entry name" value="GOLGI-ASSOCIATED OLFACTORY SIGNALING REGULATOR"/>
    <property type="match status" value="1"/>
</dbReference>
<dbReference type="PANTHER" id="PTHR47641">
    <property type="entry name" value="PERIAXIN-LIKE"/>
    <property type="match status" value="1"/>
</dbReference>
<name>GFY_HUMAN</name>
<organism>
    <name type="scientific">Homo sapiens</name>
    <name type="common">Human</name>
    <dbReference type="NCBI Taxonomy" id="9606"/>
    <lineage>
        <taxon>Eukaryota</taxon>
        <taxon>Metazoa</taxon>
        <taxon>Chordata</taxon>
        <taxon>Craniata</taxon>
        <taxon>Vertebrata</taxon>
        <taxon>Euteleostomi</taxon>
        <taxon>Mammalia</taxon>
        <taxon>Eutheria</taxon>
        <taxon>Euarchontoglires</taxon>
        <taxon>Primates</taxon>
        <taxon>Haplorrhini</taxon>
        <taxon>Catarrhini</taxon>
        <taxon>Hominidae</taxon>
        <taxon>Homo</taxon>
    </lineage>
</organism>
<reference key="1">
    <citation type="journal article" date="2004" name="Nature">
        <title>The DNA sequence and biology of human chromosome 19.</title>
        <authorList>
            <person name="Grimwood J."/>
            <person name="Gordon L.A."/>
            <person name="Olsen A.S."/>
            <person name="Terry A."/>
            <person name="Schmutz J."/>
            <person name="Lamerdin J.E."/>
            <person name="Hellsten U."/>
            <person name="Goodstein D."/>
            <person name="Couronne O."/>
            <person name="Tran-Gyamfi M."/>
            <person name="Aerts A."/>
            <person name="Altherr M."/>
            <person name="Ashworth L."/>
            <person name="Bajorek E."/>
            <person name="Black S."/>
            <person name="Branscomb E."/>
            <person name="Caenepeel S."/>
            <person name="Carrano A.V."/>
            <person name="Caoile C."/>
            <person name="Chan Y.M."/>
            <person name="Christensen M."/>
            <person name="Cleland C.A."/>
            <person name="Copeland A."/>
            <person name="Dalin E."/>
            <person name="Dehal P."/>
            <person name="Denys M."/>
            <person name="Detter J.C."/>
            <person name="Escobar J."/>
            <person name="Flowers D."/>
            <person name="Fotopulos D."/>
            <person name="Garcia C."/>
            <person name="Georgescu A.M."/>
            <person name="Glavina T."/>
            <person name="Gomez M."/>
            <person name="Gonzales E."/>
            <person name="Groza M."/>
            <person name="Hammon N."/>
            <person name="Hawkins T."/>
            <person name="Haydu L."/>
            <person name="Ho I."/>
            <person name="Huang W."/>
            <person name="Israni S."/>
            <person name="Jett J."/>
            <person name="Kadner K."/>
            <person name="Kimball H."/>
            <person name="Kobayashi A."/>
            <person name="Larionov V."/>
            <person name="Leem S.-H."/>
            <person name="Lopez F."/>
            <person name="Lou Y."/>
            <person name="Lowry S."/>
            <person name="Malfatti S."/>
            <person name="Martinez D."/>
            <person name="McCready P.M."/>
            <person name="Medina C."/>
            <person name="Morgan J."/>
            <person name="Nelson K."/>
            <person name="Nolan M."/>
            <person name="Ovcharenko I."/>
            <person name="Pitluck S."/>
            <person name="Pollard M."/>
            <person name="Popkie A.P."/>
            <person name="Predki P."/>
            <person name="Quan G."/>
            <person name="Ramirez L."/>
            <person name="Rash S."/>
            <person name="Retterer J."/>
            <person name="Rodriguez A."/>
            <person name="Rogers S."/>
            <person name="Salamov A."/>
            <person name="Salazar A."/>
            <person name="She X."/>
            <person name="Smith D."/>
            <person name="Slezak T."/>
            <person name="Solovyev V."/>
            <person name="Thayer N."/>
            <person name="Tice H."/>
            <person name="Tsai M."/>
            <person name="Ustaszewska A."/>
            <person name="Vo N."/>
            <person name="Wagner M."/>
            <person name="Wheeler J."/>
            <person name="Wu K."/>
            <person name="Xie G."/>
            <person name="Yang J."/>
            <person name="Dubchak I."/>
            <person name="Furey T.S."/>
            <person name="DeJong P."/>
            <person name="Dickson M."/>
            <person name="Gordon D."/>
            <person name="Eichler E.E."/>
            <person name="Pennacchio L.A."/>
            <person name="Richardson P."/>
            <person name="Stubbs L."/>
            <person name="Rokhsar D.S."/>
            <person name="Myers R.M."/>
            <person name="Rubin E.M."/>
            <person name="Lucas S.M."/>
        </authorList>
    </citation>
    <scope>NUCLEOTIDE SEQUENCE [LARGE SCALE GENOMIC DNA]</scope>
</reference>
<keyword id="KW-0325">Glycoprotein</keyword>
<keyword id="KW-0333">Golgi apparatus</keyword>
<keyword id="KW-0472">Membrane</keyword>
<keyword id="KW-0552">Olfaction</keyword>
<keyword id="KW-1185">Reference proteome</keyword>
<keyword id="KW-0716">Sensory transduction</keyword>
<keyword id="KW-0732">Signal</keyword>
<keyword id="KW-0812">Transmembrane</keyword>
<keyword id="KW-1133">Transmembrane helix</keyword>
<evidence type="ECO:0000250" key="1"/>
<evidence type="ECO:0000255" key="2"/>
<evidence type="ECO:0000256" key="3">
    <source>
        <dbReference type="SAM" id="MobiDB-lite"/>
    </source>
</evidence>
<comment type="function">
    <text evidence="1">Required for proper function of the olfactory system. May be involved in establishing the acuity of olfactory sensory signaling (By similarity).</text>
</comment>
<comment type="subcellular location">
    <subcellularLocation>
        <location evidence="1">Golgi apparatus membrane</location>
        <topology evidence="1">Single-pass type I membrane protein</topology>
    </subcellularLocation>
</comment>
<feature type="signal peptide" evidence="2">
    <location>
        <begin position="1"/>
        <end position="19"/>
    </location>
</feature>
<feature type="chain" id="PRO_0000424823" description="Golgi-associated olfactory signaling regulator">
    <location>
        <begin position="20"/>
        <end position="518"/>
    </location>
</feature>
<feature type="topological domain" description="Extracellular" evidence="2">
    <location>
        <begin position="20"/>
        <end position="409"/>
    </location>
</feature>
<feature type="transmembrane region" description="Helical" evidence="2">
    <location>
        <begin position="410"/>
        <end position="430"/>
    </location>
</feature>
<feature type="topological domain" description="Cytoplasmic" evidence="2">
    <location>
        <begin position="431"/>
        <end position="518"/>
    </location>
</feature>
<feature type="region of interest" description="Disordered" evidence="3">
    <location>
        <begin position="38"/>
        <end position="377"/>
    </location>
</feature>
<feature type="region of interest" description="Disordered" evidence="3">
    <location>
        <begin position="477"/>
        <end position="518"/>
    </location>
</feature>
<feature type="compositionally biased region" description="Basic and acidic residues" evidence="3">
    <location>
        <begin position="92"/>
        <end position="106"/>
    </location>
</feature>
<feature type="compositionally biased region" description="Pro residues" evidence="3">
    <location>
        <begin position="138"/>
        <end position="153"/>
    </location>
</feature>
<feature type="compositionally biased region" description="Polar residues" evidence="3">
    <location>
        <begin position="168"/>
        <end position="180"/>
    </location>
</feature>
<feature type="compositionally biased region" description="Polar residues" evidence="3">
    <location>
        <begin position="187"/>
        <end position="207"/>
    </location>
</feature>
<feature type="compositionally biased region" description="Basic and acidic residues" evidence="3">
    <location>
        <begin position="209"/>
        <end position="220"/>
    </location>
</feature>
<feature type="compositionally biased region" description="Basic and acidic residues" evidence="3">
    <location>
        <begin position="236"/>
        <end position="247"/>
    </location>
</feature>
<feature type="compositionally biased region" description="Polar residues" evidence="3">
    <location>
        <begin position="248"/>
        <end position="270"/>
    </location>
</feature>
<feature type="compositionally biased region" description="Polar residues" evidence="3">
    <location>
        <begin position="276"/>
        <end position="285"/>
    </location>
</feature>
<feature type="compositionally biased region" description="Pro residues" evidence="3">
    <location>
        <begin position="482"/>
        <end position="499"/>
    </location>
</feature>
<feature type="glycosylation site" description="N-linked (GlcNAc...) asparagine" evidence="2">
    <location>
        <position position="124"/>
    </location>
</feature>
<feature type="glycosylation site" description="N-linked (GlcNAc...) asparagine" evidence="2">
    <location>
        <position position="156"/>
    </location>
</feature>
<feature type="glycosylation site" description="N-linked (GlcNAc...) asparagine" evidence="2">
    <location>
        <position position="188"/>
    </location>
</feature>
<feature type="glycosylation site" description="N-linked (GlcNAc...) asparagine" evidence="2">
    <location>
        <position position="220"/>
    </location>
</feature>
<feature type="glycosylation site" description="N-linked (GlcNAc...) asparagine" evidence="2">
    <location>
        <position position="268"/>
    </location>
</feature>
<protein>
    <recommendedName>
        <fullName>Golgi-associated olfactory signaling regulator</fullName>
    </recommendedName>
    <alternativeName>
        <fullName>Golgi protein in olfactory neurons</fullName>
        <shortName>Goofy</shortName>
    </alternativeName>
</protein>
<proteinExistence type="inferred from homology"/>
<sequence>MKSFSRILFLVFLLAGLRSKAAPSAPLPLGCGFPDMAHPSETSPLKGASENSKRDRLNPEFPGTPYPEPSKLPHTVSLETFPLDFTEPLNPDLRETPHPESPETPKADSLTTSISESLDMPKTNLSKMAHPESSETPTPGPTEMPHPGSPETPKPNFSKTSRPEFPETPNTDLMQTTPQESPEILQLNATEVSQAELPETSNTNPTKTPDPKSPEKHDLNSTETPNSEFLQALHPDPSKTPHPESHVTHNPSPTEISQTEFPTTYYQNATDVPRTSDPQISTSLYPETPVPFKDDATALNELSLNPKPGTPAAIQPDSPKLPTSDSPGMVELKAPQNSGPKESNVPPPSARIAGPPALPGRPSQLAPATLRAPQRHSRGEGVNTIIVVERVKETGVTLVGRPRGAAGGALCLFFAGTALLIGIFVLLWCLYRRAARQRPFAHHRLPDDGDEPVLHLDAPKDPYDLYFYAPDTWVPSHIATKQPPPTPPLPPKLPPPPRGGRPQRLEALSPATLPNNFV</sequence>
<gene>
    <name type="primary">GFY</name>
</gene>
<accession>I3L273</accession>